<organism>
    <name type="scientific">Borreliella burgdorferi (strain ATCC 35210 / DSM 4680 / CIP 102532 / B31)</name>
    <name type="common">Borrelia burgdorferi</name>
    <dbReference type="NCBI Taxonomy" id="224326"/>
    <lineage>
        <taxon>Bacteria</taxon>
        <taxon>Pseudomonadati</taxon>
        <taxon>Spirochaetota</taxon>
        <taxon>Spirochaetia</taxon>
        <taxon>Spirochaetales</taxon>
        <taxon>Borreliaceae</taxon>
        <taxon>Borreliella</taxon>
    </lineage>
</organism>
<keyword id="KW-0071">Autoinducer synthesis</keyword>
<keyword id="KW-0408">Iron</keyword>
<keyword id="KW-0456">Lyase</keyword>
<keyword id="KW-0479">Metal-binding</keyword>
<keyword id="KW-0673">Quorum sensing</keyword>
<keyword id="KW-1185">Reference proteome</keyword>
<proteinExistence type="inferred from homology"/>
<reference key="1">
    <citation type="journal article" date="1997" name="Nature">
        <title>Genomic sequence of a Lyme disease spirochaete, Borrelia burgdorferi.</title>
        <authorList>
            <person name="Fraser C.M."/>
            <person name="Casjens S."/>
            <person name="Huang W.M."/>
            <person name="Sutton G.G."/>
            <person name="Clayton R.A."/>
            <person name="Lathigra R."/>
            <person name="White O."/>
            <person name="Ketchum K.A."/>
            <person name="Dodson R.J."/>
            <person name="Hickey E.K."/>
            <person name="Gwinn M.L."/>
            <person name="Dougherty B.A."/>
            <person name="Tomb J.-F."/>
            <person name="Fleischmann R.D."/>
            <person name="Richardson D.L."/>
            <person name="Peterson J.D."/>
            <person name="Kerlavage A.R."/>
            <person name="Quackenbush J."/>
            <person name="Salzberg S.L."/>
            <person name="Hanson M."/>
            <person name="van Vugt R."/>
            <person name="Palmer N."/>
            <person name="Adams M.D."/>
            <person name="Gocayne J.D."/>
            <person name="Weidman J.F."/>
            <person name="Utterback T.R."/>
            <person name="Watthey L."/>
            <person name="McDonald L.A."/>
            <person name="Artiach P."/>
            <person name="Bowman C."/>
            <person name="Garland S.A."/>
            <person name="Fujii C."/>
            <person name="Cotton M.D."/>
            <person name="Horst K."/>
            <person name="Roberts K.M."/>
            <person name="Hatch B."/>
            <person name="Smith H.O."/>
            <person name="Venter J.C."/>
        </authorList>
    </citation>
    <scope>NUCLEOTIDE SEQUENCE [LARGE SCALE GENOMIC DNA]</scope>
    <source>
        <strain>ATCC 35210 / DSM 4680 / CIP 102532 / B31</strain>
    </source>
</reference>
<evidence type="ECO:0000250" key="1"/>
<evidence type="ECO:0000305" key="2"/>
<comment type="function">
    <text evidence="1">Involved in the synthesis of autoinducer 2 (AI-2) which is secreted by bacteria and is used to communicate both the cell density and the metabolic potential of the environment. The regulation of gene expression in response to changes in cell density is called quorum sensing. Catalyzes the transformation of S-ribosylhomocysteine (RHC) to homocysteine (HC) and 4,5-dihydroxy-2,3-pentadione (DPD) (By similarity).</text>
</comment>
<comment type="catalytic activity">
    <reaction>
        <text>S-(5-deoxy-D-ribos-5-yl)-L-homocysteine = (S)-4,5-dihydroxypentane-2,3-dione + L-homocysteine</text>
        <dbReference type="Rhea" id="RHEA:17753"/>
        <dbReference type="ChEBI" id="CHEBI:29484"/>
        <dbReference type="ChEBI" id="CHEBI:58195"/>
        <dbReference type="ChEBI" id="CHEBI:58199"/>
        <dbReference type="EC" id="4.4.1.21"/>
    </reaction>
</comment>
<comment type="cofactor">
    <cofactor evidence="1">
        <name>Fe cation</name>
        <dbReference type="ChEBI" id="CHEBI:24875"/>
    </cofactor>
    <text evidence="1">Binds 1 Fe cation per subunit.</text>
</comment>
<comment type="subunit">
    <text evidence="1">Homodimer.</text>
</comment>
<comment type="similarity">
    <text evidence="2">Belongs to the LuxS family.</text>
</comment>
<accession>O50164</accession>
<sequence>MKKITSFTIDHTKLNPGIYVSRKDTFENVIFTTIDIRIKAPNIEPIIENAAIHTIEHIGATLLRNNEVWTEKIVYFGPMGCRTGFYLIIFGDYESKDLVDLVSWLFSEIVNFSEPIPGASDKECGNYKEHNLDMAKYESSKYLQILNNIKEENLKYP</sequence>
<protein>
    <recommendedName>
        <fullName>S-ribosylhomocysteine lyase</fullName>
        <ecNumber>4.4.1.21</ecNumber>
    </recommendedName>
    <alternativeName>
        <fullName>AI-2 synthesis protein</fullName>
    </alternativeName>
    <alternativeName>
        <fullName>Autoinducer-2 production protein LuxS</fullName>
    </alternativeName>
</protein>
<gene>
    <name type="primary">luxS</name>
    <name type="ordered locus">BB_0377</name>
</gene>
<feature type="chain" id="PRO_0000172212" description="S-ribosylhomocysteine lyase">
    <location>
        <begin position="1"/>
        <end position="157"/>
    </location>
</feature>
<feature type="binding site" evidence="1">
    <location>
        <position position="53"/>
    </location>
    <ligand>
        <name>Fe cation</name>
        <dbReference type="ChEBI" id="CHEBI:24875"/>
    </ligand>
</feature>
<feature type="binding site" evidence="1">
    <location>
        <position position="57"/>
    </location>
    <ligand>
        <name>Fe cation</name>
        <dbReference type="ChEBI" id="CHEBI:24875"/>
    </ligand>
</feature>
<feature type="binding site" evidence="1">
    <location>
        <position position="124"/>
    </location>
    <ligand>
        <name>Fe cation</name>
        <dbReference type="ChEBI" id="CHEBI:24875"/>
    </ligand>
</feature>
<name>LUXS_BORBU</name>
<dbReference type="EC" id="4.4.1.21"/>
<dbReference type="EMBL" id="AE000783">
    <property type="protein sequence ID" value="AAC66762.2"/>
    <property type="molecule type" value="Genomic_DNA"/>
</dbReference>
<dbReference type="PIR" id="H70146">
    <property type="entry name" value="H70146"/>
</dbReference>
<dbReference type="RefSeq" id="NP_212511.2">
    <property type="nucleotide sequence ID" value="NC_001318.1"/>
</dbReference>
<dbReference type="RefSeq" id="WP_002656744.1">
    <property type="nucleotide sequence ID" value="NC_001318.1"/>
</dbReference>
<dbReference type="SMR" id="O50164"/>
<dbReference type="STRING" id="224326.BB_0377"/>
<dbReference type="PaxDb" id="224326-BB_0377"/>
<dbReference type="EnsemblBacteria" id="AAC66762">
    <property type="protein sequence ID" value="AAC66762"/>
    <property type="gene ID" value="BB_0377"/>
</dbReference>
<dbReference type="KEGG" id="bbu:BB_0377"/>
<dbReference type="PATRIC" id="fig|224326.49.peg.772"/>
<dbReference type="HOGENOM" id="CLU_107531_1_0_12"/>
<dbReference type="OrthoDB" id="9788129at2"/>
<dbReference type="Proteomes" id="UP000001807">
    <property type="component" value="Chromosome"/>
</dbReference>
<dbReference type="GO" id="GO:0005506">
    <property type="term" value="F:iron ion binding"/>
    <property type="evidence" value="ECO:0007669"/>
    <property type="project" value="InterPro"/>
</dbReference>
<dbReference type="GO" id="GO:0043768">
    <property type="term" value="F:S-ribosylhomocysteine lyase activity"/>
    <property type="evidence" value="ECO:0007669"/>
    <property type="project" value="UniProtKB-UniRule"/>
</dbReference>
<dbReference type="GO" id="GO:0009372">
    <property type="term" value="P:quorum sensing"/>
    <property type="evidence" value="ECO:0007669"/>
    <property type="project" value="UniProtKB-UniRule"/>
</dbReference>
<dbReference type="Gene3D" id="3.30.1360.80">
    <property type="entry name" value="S-ribosylhomocysteinase (LuxS)"/>
    <property type="match status" value="1"/>
</dbReference>
<dbReference type="HAMAP" id="MF_00091">
    <property type="entry name" value="LuxS"/>
    <property type="match status" value="1"/>
</dbReference>
<dbReference type="InterPro" id="IPR037005">
    <property type="entry name" value="LuxS_sf"/>
</dbReference>
<dbReference type="InterPro" id="IPR011249">
    <property type="entry name" value="Metalloenz_LuxS/M16"/>
</dbReference>
<dbReference type="InterPro" id="IPR003815">
    <property type="entry name" value="S-ribosylhomocysteinase"/>
</dbReference>
<dbReference type="NCBIfam" id="NF002604">
    <property type="entry name" value="PRK02260.1-4"/>
    <property type="match status" value="1"/>
</dbReference>
<dbReference type="PANTHER" id="PTHR35799">
    <property type="entry name" value="S-RIBOSYLHOMOCYSTEINE LYASE"/>
    <property type="match status" value="1"/>
</dbReference>
<dbReference type="PANTHER" id="PTHR35799:SF1">
    <property type="entry name" value="S-RIBOSYLHOMOCYSTEINE LYASE"/>
    <property type="match status" value="1"/>
</dbReference>
<dbReference type="Pfam" id="PF02664">
    <property type="entry name" value="LuxS"/>
    <property type="match status" value="1"/>
</dbReference>
<dbReference type="PIRSF" id="PIRSF006160">
    <property type="entry name" value="AI2"/>
    <property type="match status" value="1"/>
</dbReference>
<dbReference type="PRINTS" id="PR01487">
    <property type="entry name" value="LUXSPROTEIN"/>
</dbReference>
<dbReference type="SUPFAM" id="SSF63411">
    <property type="entry name" value="LuxS/MPP-like metallohydrolase"/>
    <property type="match status" value="1"/>
</dbReference>